<keyword id="KW-0963">Cytoplasm</keyword>
<keyword id="KW-0547">Nucleotide-binding</keyword>
<keyword id="KW-0653">Protein transport</keyword>
<keyword id="KW-1185">Reference proteome</keyword>
<keyword id="KW-0694">RNA-binding</keyword>
<keyword id="KW-0813">Transport</keyword>
<feature type="chain" id="PRO_0000081450" description="RNA-binding protein VTS1">
    <location>
        <begin position="1"/>
        <end position="577"/>
    </location>
</feature>
<feature type="domain" description="SAM">
    <location>
        <begin position="515"/>
        <end position="576"/>
    </location>
</feature>
<feature type="region of interest" description="Disordered" evidence="3">
    <location>
        <begin position="1"/>
        <end position="41"/>
    </location>
</feature>
<feature type="region of interest" description="Disordered" evidence="3">
    <location>
        <begin position="286"/>
        <end position="355"/>
    </location>
</feature>
<feature type="region of interest" description="Disordered" evidence="3">
    <location>
        <begin position="415"/>
        <end position="510"/>
    </location>
</feature>
<feature type="compositionally biased region" description="Polar residues" evidence="3">
    <location>
        <begin position="26"/>
        <end position="38"/>
    </location>
</feature>
<feature type="compositionally biased region" description="Polar residues" evidence="3">
    <location>
        <begin position="286"/>
        <end position="298"/>
    </location>
</feature>
<feature type="compositionally biased region" description="Polar residues" evidence="3">
    <location>
        <begin position="340"/>
        <end position="355"/>
    </location>
</feature>
<feature type="compositionally biased region" description="Basic residues" evidence="3">
    <location>
        <begin position="418"/>
        <end position="430"/>
    </location>
</feature>
<feature type="compositionally biased region" description="Low complexity" evidence="3">
    <location>
        <begin position="495"/>
        <end position="506"/>
    </location>
</feature>
<organism>
    <name type="scientific">Debaryomyces hansenii (strain ATCC 36239 / CBS 767 / BCRC 21394 / JCM 1990 / NBRC 0083 / IGC 2968)</name>
    <name type="common">Yeast</name>
    <name type="synonym">Torulaspora hansenii</name>
    <dbReference type="NCBI Taxonomy" id="284592"/>
    <lineage>
        <taxon>Eukaryota</taxon>
        <taxon>Fungi</taxon>
        <taxon>Dikarya</taxon>
        <taxon>Ascomycota</taxon>
        <taxon>Saccharomycotina</taxon>
        <taxon>Pichiomycetes</taxon>
        <taxon>Debaryomycetaceae</taxon>
        <taxon>Debaryomyces</taxon>
    </lineage>
</organism>
<dbReference type="EMBL" id="CR382136">
    <property type="protein sequence ID" value="CAR65640.1"/>
    <property type="molecule type" value="Genomic_DNA"/>
</dbReference>
<dbReference type="RefSeq" id="XP_002770284.1">
    <property type="nucleotide sequence ID" value="XM_002770238.1"/>
</dbReference>
<dbReference type="SMR" id="Q6BSL1"/>
<dbReference type="FunCoup" id="Q6BSL1">
    <property type="interactions" value="51"/>
</dbReference>
<dbReference type="STRING" id="284592.Q6BSL1"/>
<dbReference type="GeneID" id="8998495"/>
<dbReference type="KEGG" id="dha:DEHA2D08030g"/>
<dbReference type="VEuPathDB" id="FungiDB:DEHA2D08030g"/>
<dbReference type="eggNOG" id="KOG3791">
    <property type="taxonomic scope" value="Eukaryota"/>
</dbReference>
<dbReference type="HOGENOM" id="CLU_443421_0_0_1"/>
<dbReference type="InParanoid" id="Q6BSL1"/>
<dbReference type="OMA" id="LHKYTDC"/>
<dbReference type="OrthoDB" id="2155283at2759"/>
<dbReference type="Proteomes" id="UP000000599">
    <property type="component" value="Chromosome D"/>
</dbReference>
<dbReference type="GO" id="GO:0005829">
    <property type="term" value="C:cytosol"/>
    <property type="evidence" value="ECO:0007669"/>
    <property type="project" value="UniProtKB-SubCell"/>
</dbReference>
<dbReference type="GO" id="GO:0000932">
    <property type="term" value="C:P-body"/>
    <property type="evidence" value="ECO:0007669"/>
    <property type="project" value="UniProtKB-SubCell"/>
</dbReference>
<dbReference type="GO" id="GO:0003729">
    <property type="term" value="F:mRNA binding"/>
    <property type="evidence" value="ECO:0007669"/>
    <property type="project" value="InterPro"/>
</dbReference>
<dbReference type="GO" id="GO:0000166">
    <property type="term" value="F:nucleotide binding"/>
    <property type="evidence" value="ECO:0007669"/>
    <property type="project" value="UniProtKB-KW"/>
</dbReference>
<dbReference type="GO" id="GO:0000289">
    <property type="term" value="P:nuclear-transcribed mRNA poly(A) tail shortening"/>
    <property type="evidence" value="ECO:0007669"/>
    <property type="project" value="TreeGrafter"/>
</dbReference>
<dbReference type="GO" id="GO:0015031">
    <property type="term" value="P:protein transport"/>
    <property type="evidence" value="ECO:0007669"/>
    <property type="project" value="UniProtKB-KW"/>
</dbReference>
<dbReference type="CDD" id="cd09556">
    <property type="entry name" value="SAM_VTS1_fungal"/>
    <property type="match status" value="1"/>
</dbReference>
<dbReference type="Gene3D" id="1.10.150.50">
    <property type="entry name" value="Transcription Factor, Ets-1"/>
    <property type="match status" value="1"/>
</dbReference>
<dbReference type="InterPro" id="IPR001660">
    <property type="entry name" value="SAM"/>
</dbReference>
<dbReference type="InterPro" id="IPR013761">
    <property type="entry name" value="SAM/pointed_sf"/>
</dbReference>
<dbReference type="InterPro" id="IPR050897">
    <property type="entry name" value="SMAUG/VTS1_RNA-bind"/>
</dbReference>
<dbReference type="InterPro" id="IPR037635">
    <property type="entry name" value="VTS1_SAM"/>
</dbReference>
<dbReference type="PANTHER" id="PTHR12515:SF5">
    <property type="entry name" value="PROTEIN SMAUG"/>
    <property type="match status" value="1"/>
</dbReference>
<dbReference type="PANTHER" id="PTHR12515">
    <property type="entry name" value="STERILE ALPHA MOTIF DOMAIN CONTAINING PROTEIN 4-RELATED"/>
    <property type="match status" value="1"/>
</dbReference>
<dbReference type="SMART" id="SM00454">
    <property type="entry name" value="SAM"/>
    <property type="match status" value="1"/>
</dbReference>
<dbReference type="SUPFAM" id="SSF47769">
    <property type="entry name" value="SAM/Pointed domain"/>
    <property type="match status" value="1"/>
</dbReference>
<comment type="function">
    <text evidence="2">RNA-binding protein involved in post-transcriptional regulation through transcript degradation.</text>
</comment>
<comment type="subunit">
    <text evidence="2">Monomer. Binds to RNA.</text>
</comment>
<comment type="subcellular location">
    <subcellularLocation>
        <location evidence="2">Cytoplasm</location>
        <location evidence="2">Cytosol</location>
    </subcellularLocation>
    <subcellularLocation>
        <location evidence="1">Cytoplasm</location>
        <location evidence="1">P-body</location>
    </subcellularLocation>
</comment>
<comment type="similarity">
    <text evidence="4">Belongs to the VTS1 family.</text>
</comment>
<gene>
    <name type="primary">VTS1</name>
    <name type="ordered locus">DEHA2D08030g</name>
</gene>
<reference key="1">
    <citation type="journal article" date="2004" name="Nature">
        <title>Genome evolution in yeasts.</title>
        <authorList>
            <person name="Dujon B."/>
            <person name="Sherman D."/>
            <person name="Fischer G."/>
            <person name="Durrens P."/>
            <person name="Casaregola S."/>
            <person name="Lafontaine I."/>
            <person name="de Montigny J."/>
            <person name="Marck C."/>
            <person name="Neuveglise C."/>
            <person name="Talla E."/>
            <person name="Goffard N."/>
            <person name="Frangeul L."/>
            <person name="Aigle M."/>
            <person name="Anthouard V."/>
            <person name="Babour A."/>
            <person name="Barbe V."/>
            <person name="Barnay S."/>
            <person name="Blanchin S."/>
            <person name="Beckerich J.-M."/>
            <person name="Beyne E."/>
            <person name="Bleykasten C."/>
            <person name="Boisrame A."/>
            <person name="Boyer J."/>
            <person name="Cattolico L."/>
            <person name="Confanioleri F."/>
            <person name="de Daruvar A."/>
            <person name="Despons L."/>
            <person name="Fabre E."/>
            <person name="Fairhead C."/>
            <person name="Ferry-Dumazet H."/>
            <person name="Groppi A."/>
            <person name="Hantraye F."/>
            <person name="Hennequin C."/>
            <person name="Jauniaux N."/>
            <person name="Joyet P."/>
            <person name="Kachouri R."/>
            <person name="Kerrest A."/>
            <person name="Koszul R."/>
            <person name="Lemaire M."/>
            <person name="Lesur I."/>
            <person name="Ma L."/>
            <person name="Muller H."/>
            <person name="Nicaud J.-M."/>
            <person name="Nikolski M."/>
            <person name="Oztas S."/>
            <person name="Ozier-Kalogeropoulos O."/>
            <person name="Pellenz S."/>
            <person name="Potier S."/>
            <person name="Richard G.-F."/>
            <person name="Straub M.-L."/>
            <person name="Suleau A."/>
            <person name="Swennen D."/>
            <person name="Tekaia F."/>
            <person name="Wesolowski-Louvel M."/>
            <person name="Westhof E."/>
            <person name="Wirth B."/>
            <person name="Zeniou-Meyer M."/>
            <person name="Zivanovic Y."/>
            <person name="Bolotin-Fukuhara M."/>
            <person name="Thierry A."/>
            <person name="Bouchier C."/>
            <person name="Caudron B."/>
            <person name="Scarpelli C."/>
            <person name="Gaillardin C."/>
            <person name="Weissenbach J."/>
            <person name="Wincker P."/>
            <person name="Souciet J.-L."/>
        </authorList>
    </citation>
    <scope>NUCLEOTIDE SEQUENCE [LARGE SCALE GENOMIC DNA]</scope>
    <source>
        <strain>ATCC 36239 / CBS 767 / BCRC 21394 / JCM 1990 / NBRC 0083 / IGC 2968</strain>
    </source>
</reference>
<protein>
    <recommendedName>
        <fullName>RNA-binding protein VTS1</fullName>
    </recommendedName>
</protein>
<accession>Q6BSL1</accession>
<accession>B5RTF5</accession>
<proteinExistence type="inferred from homology"/>
<evidence type="ECO:0000250" key="1">
    <source>
        <dbReference type="UniProtKB" id="J9VVN9"/>
    </source>
</evidence>
<evidence type="ECO:0000250" key="2">
    <source>
        <dbReference type="UniProtKB" id="Q08831"/>
    </source>
</evidence>
<evidence type="ECO:0000256" key="3">
    <source>
        <dbReference type="SAM" id="MobiDB-lite"/>
    </source>
</evidence>
<evidence type="ECO:0000305" key="4"/>
<name>VTS1_DEBHA</name>
<sequence>MDRPGFSSPPFNDKKIVLSPPPIESKQYSFLQQHNANSGPPVGFQERQQSVGYNLQQEFETLTADLDLDLRNNKDMQQNVDAPLPTTQSGNVGRGMMPSTSQYGFGELGTGGSLQNALLTDAALSPNLPTASSHSALGSLLNNNGNGSFLPPLASIPNRPQSVNDFSNFFNRQQQQQQTIDRQQQQQATNFYSDLIVFCNWIETLNPRDNITMIDYLCNNLPLDILLTFKSKLDSHLTHYHNQSATSQPLHQQQNQPVSFGVLSPYQQQQNDILAEMENLNLDNSLSSDAGASLNQKSAPALQQPKPKLNSVRNHGSHLYAEQQTQRPRSADPNIHKYSPNYNLPQQQFERTKSPTSHLYEKTNFLQLAAANSNPPSVSQQKGANNSDDSVDLSAHAALKLGALATINSRVALDSNRKSHVHSAHGHQQPHSHYFPQQGASQHGPFSPASAYEESINRSANSSSVPILVQHNKSPPGLTRSKKSTEGLGQGANASSGSPQTTSTTSMPADISNPDLLNNIPAWLKLLRLHKYTDCLKDIYWKDLIEYDDLSLEKRGVKALGARRKLLKAFDAVKESS</sequence>